<reference key="1">
    <citation type="journal article" date="2008" name="J. Bacteriol.">
        <title>Insights into the environmental resistance gene pool from the genome sequence of the multidrug-resistant environmental isolate Escherichia coli SMS-3-5.</title>
        <authorList>
            <person name="Fricke W.F."/>
            <person name="Wright M.S."/>
            <person name="Lindell A.H."/>
            <person name="Harkins D.M."/>
            <person name="Baker-Austin C."/>
            <person name="Ravel J."/>
            <person name="Stepanauskas R."/>
        </authorList>
    </citation>
    <scope>NUCLEOTIDE SEQUENCE [LARGE SCALE GENOMIC DNA]</scope>
    <source>
        <strain>SMS-3-5 / SECEC</strain>
    </source>
</reference>
<feature type="chain" id="PRO_1000133332" description="Oxygen-dependent choline dehydrogenase">
    <location>
        <begin position="1"/>
        <end position="562"/>
    </location>
</feature>
<feature type="active site" description="Proton acceptor" evidence="1">
    <location>
        <position position="473"/>
    </location>
</feature>
<feature type="binding site" evidence="1">
    <location>
        <begin position="4"/>
        <end position="33"/>
    </location>
    <ligand>
        <name>FAD</name>
        <dbReference type="ChEBI" id="CHEBI:57692"/>
    </ligand>
</feature>
<keyword id="KW-0274">FAD</keyword>
<keyword id="KW-0285">Flavoprotein</keyword>
<keyword id="KW-0520">NAD</keyword>
<keyword id="KW-0560">Oxidoreductase</keyword>
<name>BETA_ECOSM</name>
<organism>
    <name type="scientific">Escherichia coli (strain SMS-3-5 / SECEC)</name>
    <dbReference type="NCBI Taxonomy" id="439855"/>
    <lineage>
        <taxon>Bacteria</taxon>
        <taxon>Pseudomonadati</taxon>
        <taxon>Pseudomonadota</taxon>
        <taxon>Gammaproteobacteria</taxon>
        <taxon>Enterobacterales</taxon>
        <taxon>Enterobacteriaceae</taxon>
        <taxon>Escherichia</taxon>
    </lineage>
</organism>
<evidence type="ECO:0000255" key="1">
    <source>
        <dbReference type="HAMAP-Rule" id="MF_00750"/>
    </source>
</evidence>
<gene>
    <name evidence="1" type="primary">betA</name>
    <name type="ordered locus">EcSMS35_0342</name>
</gene>
<dbReference type="EC" id="1.1.99.1" evidence="1"/>
<dbReference type="EC" id="1.2.1.8" evidence="1"/>
<dbReference type="EMBL" id="CP000970">
    <property type="protein sequence ID" value="ACB17123.1"/>
    <property type="molecule type" value="Genomic_DNA"/>
</dbReference>
<dbReference type="RefSeq" id="WP_001159141.1">
    <property type="nucleotide sequence ID" value="NC_010498.1"/>
</dbReference>
<dbReference type="SMR" id="B1LIJ7"/>
<dbReference type="KEGG" id="ecm:EcSMS35_0342"/>
<dbReference type="HOGENOM" id="CLU_002865_7_1_6"/>
<dbReference type="UniPathway" id="UPA00529">
    <property type="reaction ID" value="UER00385"/>
</dbReference>
<dbReference type="Proteomes" id="UP000007011">
    <property type="component" value="Chromosome"/>
</dbReference>
<dbReference type="GO" id="GO:0016020">
    <property type="term" value="C:membrane"/>
    <property type="evidence" value="ECO:0007669"/>
    <property type="project" value="TreeGrafter"/>
</dbReference>
<dbReference type="GO" id="GO:0008802">
    <property type="term" value="F:betaine-aldehyde dehydrogenase (NAD+) activity"/>
    <property type="evidence" value="ECO:0007669"/>
    <property type="project" value="UniProtKB-EC"/>
</dbReference>
<dbReference type="GO" id="GO:0008812">
    <property type="term" value="F:choline dehydrogenase activity"/>
    <property type="evidence" value="ECO:0007669"/>
    <property type="project" value="UniProtKB-UniRule"/>
</dbReference>
<dbReference type="GO" id="GO:0050660">
    <property type="term" value="F:flavin adenine dinucleotide binding"/>
    <property type="evidence" value="ECO:0007669"/>
    <property type="project" value="InterPro"/>
</dbReference>
<dbReference type="GO" id="GO:0019285">
    <property type="term" value="P:glycine betaine biosynthetic process from choline"/>
    <property type="evidence" value="ECO:0007669"/>
    <property type="project" value="UniProtKB-UniRule"/>
</dbReference>
<dbReference type="Gene3D" id="3.50.50.60">
    <property type="entry name" value="FAD/NAD(P)-binding domain"/>
    <property type="match status" value="1"/>
</dbReference>
<dbReference type="Gene3D" id="3.30.560.10">
    <property type="entry name" value="Glucose Oxidase, domain 3"/>
    <property type="match status" value="1"/>
</dbReference>
<dbReference type="HAMAP" id="MF_00750">
    <property type="entry name" value="Choline_dehydrogen"/>
    <property type="match status" value="1"/>
</dbReference>
<dbReference type="InterPro" id="IPR011533">
    <property type="entry name" value="BetA"/>
</dbReference>
<dbReference type="InterPro" id="IPR036188">
    <property type="entry name" value="FAD/NAD-bd_sf"/>
</dbReference>
<dbReference type="InterPro" id="IPR012132">
    <property type="entry name" value="GMC_OxRdtase"/>
</dbReference>
<dbReference type="InterPro" id="IPR000172">
    <property type="entry name" value="GMC_OxRdtase_N"/>
</dbReference>
<dbReference type="InterPro" id="IPR007867">
    <property type="entry name" value="GMC_OxRtase_C"/>
</dbReference>
<dbReference type="NCBIfam" id="TIGR01810">
    <property type="entry name" value="betA"/>
    <property type="match status" value="1"/>
</dbReference>
<dbReference type="NCBIfam" id="NF002550">
    <property type="entry name" value="PRK02106.1"/>
    <property type="match status" value="1"/>
</dbReference>
<dbReference type="PANTHER" id="PTHR11552:SF147">
    <property type="entry name" value="CHOLINE DEHYDROGENASE, MITOCHONDRIAL"/>
    <property type="match status" value="1"/>
</dbReference>
<dbReference type="PANTHER" id="PTHR11552">
    <property type="entry name" value="GLUCOSE-METHANOL-CHOLINE GMC OXIDOREDUCTASE"/>
    <property type="match status" value="1"/>
</dbReference>
<dbReference type="Pfam" id="PF05199">
    <property type="entry name" value="GMC_oxred_C"/>
    <property type="match status" value="1"/>
</dbReference>
<dbReference type="Pfam" id="PF00732">
    <property type="entry name" value="GMC_oxred_N"/>
    <property type="match status" value="1"/>
</dbReference>
<dbReference type="PIRSF" id="PIRSF000137">
    <property type="entry name" value="Alcohol_oxidase"/>
    <property type="match status" value="1"/>
</dbReference>
<dbReference type="SUPFAM" id="SSF54373">
    <property type="entry name" value="FAD-linked reductases, C-terminal domain"/>
    <property type="match status" value="1"/>
</dbReference>
<dbReference type="SUPFAM" id="SSF51905">
    <property type="entry name" value="FAD/NAD(P)-binding domain"/>
    <property type="match status" value="1"/>
</dbReference>
<dbReference type="PROSITE" id="PS00623">
    <property type="entry name" value="GMC_OXRED_1"/>
    <property type="match status" value="1"/>
</dbReference>
<dbReference type="PROSITE" id="PS00624">
    <property type="entry name" value="GMC_OXRED_2"/>
    <property type="match status" value="1"/>
</dbReference>
<proteinExistence type="inferred from homology"/>
<comment type="function">
    <text evidence="1">Involved in the biosynthesis of the osmoprotectant glycine betaine. Catalyzes the oxidation of choline to betaine aldehyde and betaine aldehyde to glycine betaine at the same rate.</text>
</comment>
<comment type="catalytic activity">
    <reaction evidence="1">
        <text>choline + A = betaine aldehyde + AH2</text>
        <dbReference type="Rhea" id="RHEA:17433"/>
        <dbReference type="ChEBI" id="CHEBI:13193"/>
        <dbReference type="ChEBI" id="CHEBI:15354"/>
        <dbReference type="ChEBI" id="CHEBI:15710"/>
        <dbReference type="ChEBI" id="CHEBI:17499"/>
        <dbReference type="EC" id="1.1.99.1"/>
    </reaction>
</comment>
<comment type="catalytic activity">
    <reaction evidence="1">
        <text>betaine aldehyde + NAD(+) + H2O = glycine betaine + NADH + 2 H(+)</text>
        <dbReference type="Rhea" id="RHEA:15305"/>
        <dbReference type="ChEBI" id="CHEBI:15377"/>
        <dbReference type="ChEBI" id="CHEBI:15378"/>
        <dbReference type="ChEBI" id="CHEBI:15710"/>
        <dbReference type="ChEBI" id="CHEBI:17750"/>
        <dbReference type="ChEBI" id="CHEBI:57540"/>
        <dbReference type="ChEBI" id="CHEBI:57945"/>
        <dbReference type="EC" id="1.2.1.8"/>
    </reaction>
</comment>
<comment type="cofactor">
    <cofactor evidence="1">
        <name>FAD</name>
        <dbReference type="ChEBI" id="CHEBI:57692"/>
    </cofactor>
</comment>
<comment type="pathway">
    <text evidence="1">Amine and polyamine biosynthesis; betaine biosynthesis via choline pathway; betaine aldehyde from choline (cytochrome c reductase route): step 1/1.</text>
</comment>
<comment type="similarity">
    <text evidence="1">Belongs to the GMC oxidoreductase family.</text>
</comment>
<protein>
    <recommendedName>
        <fullName evidence="1">Oxygen-dependent choline dehydrogenase</fullName>
        <shortName evidence="1">CDH</shortName>
        <shortName evidence="1">CHD</shortName>
        <ecNumber evidence="1">1.1.99.1</ecNumber>
    </recommendedName>
    <alternativeName>
        <fullName evidence="1">Betaine aldehyde dehydrogenase</fullName>
        <shortName evidence="1">BADH</shortName>
        <ecNumber evidence="1">1.2.1.8</ecNumber>
    </alternativeName>
</protein>
<accession>B1LIJ7</accession>
<sequence length="562" mass="62430">MQFDYIIIGAGSAGNVLATRLTEDPNTTVLLLEAGGPDYRFDFRTQMPAALAFPLQGKRYNWAYETEPEPFMNNRRMECGRGKGLGGSSLINGMCYIRGNALDLDNWAQEPGLENWSYLDCLPYYRKAETRDVGENDYHGGDGPVSVTTSKPGVNPLFEAMIEAGVQAGYPRTDDLNGYQQEGFGPMDRTVTPHGRRASTARGYLDQAKSRSNLTIRTHAMTDHIIFDGKRAVGVEWLEGDSTIPTRAAANKEVLLCAGAIASPQILQRSGVGNAGLLAEFDIPLVHELPGVGENLQDHLEMYLQYECKEPVSLYPALQWWNQPKIGAEWLFGGTGIGASNHFEAGGFIRSREEFAWPNIQYHFLPVAINYNGSNAVKEHGFQCHVGSMRSPSRGHVRIKSRAPHQHPAILFNYMSHEQDWQEFRDAIRITREIMHQPALDQYHGREISPGVECQTDEQLDEFVRNHAETAFHPCGTCKMGYDEMSVVDGEGRVHGLEGLRVVDASIMPQIITGNLNATTIMIGEKMADMIRGKDALPRSTAGYYVANGMPVRAKKMSRDVN</sequence>